<keyword id="KW-0028">Amino-acid biosynthesis</keyword>
<keyword id="KW-0100">Branched-chain amino acid biosynthesis</keyword>
<keyword id="KW-0460">Magnesium</keyword>
<keyword id="KW-0479">Metal-binding</keyword>
<keyword id="KW-0521">NADP</keyword>
<keyword id="KW-0560">Oxidoreductase</keyword>
<keyword id="KW-1185">Reference proteome</keyword>
<comment type="function">
    <text evidence="1">Involved in the biosynthesis of branched-chain amino acids (BCAA). Catalyzes an alkyl-migration followed by a ketol-acid reduction of (S)-2-acetolactate (S2AL) to yield (R)-2,3-dihydroxy-isovalerate. In the isomerase reaction, S2AL is rearranged via a Mg-dependent methyl migration to produce 3-hydroxy-3-methyl-2-ketobutyrate (HMKB). In the reductase reaction, this 2-ketoacid undergoes a metal-dependent reduction by NADPH to yield (R)-2,3-dihydroxy-isovalerate.</text>
</comment>
<comment type="catalytic activity">
    <reaction evidence="1">
        <text>(2R)-2,3-dihydroxy-3-methylbutanoate + NADP(+) = (2S)-2-acetolactate + NADPH + H(+)</text>
        <dbReference type="Rhea" id="RHEA:22068"/>
        <dbReference type="ChEBI" id="CHEBI:15378"/>
        <dbReference type="ChEBI" id="CHEBI:49072"/>
        <dbReference type="ChEBI" id="CHEBI:57783"/>
        <dbReference type="ChEBI" id="CHEBI:58349"/>
        <dbReference type="ChEBI" id="CHEBI:58476"/>
        <dbReference type="EC" id="1.1.1.86"/>
    </reaction>
</comment>
<comment type="catalytic activity">
    <reaction evidence="1">
        <text>(2R,3R)-2,3-dihydroxy-3-methylpentanoate + NADP(+) = (S)-2-ethyl-2-hydroxy-3-oxobutanoate + NADPH + H(+)</text>
        <dbReference type="Rhea" id="RHEA:13493"/>
        <dbReference type="ChEBI" id="CHEBI:15378"/>
        <dbReference type="ChEBI" id="CHEBI:49256"/>
        <dbReference type="ChEBI" id="CHEBI:49258"/>
        <dbReference type="ChEBI" id="CHEBI:57783"/>
        <dbReference type="ChEBI" id="CHEBI:58349"/>
        <dbReference type="EC" id="1.1.1.86"/>
    </reaction>
</comment>
<comment type="cofactor">
    <cofactor evidence="1">
        <name>Mg(2+)</name>
        <dbReference type="ChEBI" id="CHEBI:18420"/>
    </cofactor>
    <text evidence="1">Binds 2 magnesium ions per subunit.</text>
</comment>
<comment type="pathway">
    <text evidence="1">Amino-acid biosynthesis; L-isoleucine biosynthesis; L-isoleucine from 2-oxobutanoate: step 2/4.</text>
</comment>
<comment type="pathway">
    <text evidence="1">Amino-acid biosynthesis; L-valine biosynthesis; L-valine from pyruvate: step 2/4.</text>
</comment>
<comment type="similarity">
    <text evidence="1">Belongs to the ketol-acid reductoisomerase family.</text>
</comment>
<sequence length="339" mass="36747">MRVYYDSDADVNLIKAKKVAVVGYGSQGHAHALNLKESGVKELVVALRKGSAAVAKAEAAGLRVMTPEEAAAWADVVMILTPDEGQGDLYRDSLAANLKPGAAIAFAHGLNIHFNLIEPRADIDVFMIAPKGPGHTVRSEYQRGGGVPCLVAVAQNPSGNALDIALSYASAIGGGRAGIIETTFKEECETDLFGEQTVLCGGLVELIKAGFETLVEAGYAPEMAYFECLHEVKLIVDLIYEGGIANMNYSISNTAEYGEYVTGPRMITPETKAEMKRVLDDIQKGRFTRDWMLENKVNQTNFKAMRRANAAHPIEEVGEKLRAMMPWIKKGALVDKTRN</sequence>
<protein>
    <recommendedName>
        <fullName evidence="1">Ketol-acid reductoisomerase (NADP(+))</fullName>
        <shortName evidence="1">KARI</shortName>
        <ecNumber evidence="1">1.1.1.86</ecNumber>
    </recommendedName>
    <alternativeName>
        <fullName evidence="1">Acetohydroxy-acid isomeroreductase</fullName>
        <shortName evidence="1">AHIR</shortName>
    </alternativeName>
    <alternativeName>
        <fullName evidence="1">Alpha-keto-beta-hydroxylacyl reductoisomerase</fullName>
    </alternativeName>
    <alternativeName>
        <fullName evidence="1">Ketol-acid reductoisomerase type 1</fullName>
    </alternativeName>
    <alternativeName>
        <fullName evidence="1">Ketol-acid reductoisomerase type I</fullName>
    </alternativeName>
</protein>
<name>ILVC_ACICJ</name>
<feature type="chain" id="PRO_1000050471" description="Ketol-acid reductoisomerase (NADP(+))">
    <location>
        <begin position="1"/>
        <end position="339"/>
    </location>
</feature>
<feature type="domain" description="KARI N-terminal Rossmann" evidence="2">
    <location>
        <begin position="1"/>
        <end position="182"/>
    </location>
</feature>
<feature type="domain" description="KARI C-terminal knotted" evidence="3">
    <location>
        <begin position="183"/>
        <end position="328"/>
    </location>
</feature>
<feature type="active site" evidence="1">
    <location>
        <position position="108"/>
    </location>
</feature>
<feature type="binding site" evidence="1">
    <location>
        <begin position="24"/>
        <end position="27"/>
    </location>
    <ligand>
        <name>NADP(+)</name>
        <dbReference type="ChEBI" id="CHEBI:58349"/>
    </ligand>
</feature>
<feature type="binding site" evidence="1">
    <location>
        <position position="48"/>
    </location>
    <ligand>
        <name>NADP(+)</name>
        <dbReference type="ChEBI" id="CHEBI:58349"/>
    </ligand>
</feature>
<feature type="binding site" evidence="1">
    <location>
        <position position="51"/>
    </location>
    <ligand>
        <name>NADP(+)</name>
        <dbReference type="ChEBI" id="CHEBI:58349"/>
    </ligand>
</feature>
<feature type="binding site" evidence="1">
    <location>
        <begin position="83"/>
        <end position="86"/>
    </location>
    <ligand>
        <name>NADP(+)</name>
        <dbReference type="ChEBI" id="CHEBI:58349"/>
    </ligand>
</feature>
<feature type="binding site" evidence="1">
    <location>
        <position position="134"/>
    </location>
    <ligand>
        <name>NADP(+)</name>
        <dbReference type="ChEBI" id="CHEBI:58349"/>
    </ligand>
</feature>
<feature type="binding site" evidence="1">
    <location>
        <position position="191"/>
    </location>
    <ligand>
        <name>Mg(2+)</name>
        <dbReference type="ChEBI" id="CHEBI:18420"/>
        <label>1</label>
    </ligand>
</feature>
<feature type="binding site" evidence="1">
    <location>
        <position position="191"/>
    </location>
    <ligand>
        <name>Mg(2+)</name>
        <dbReference type="ChEBI" id="CHEBI:18420"/>
        <label>2</label>
    </ligand>
</feature>
<feature type="binding site" evidence="1">
    <location>
        <position position="195"/>
    </location>
    <ligand>
        <name>Mg(2+)</name>
        <dbReference type="ChEBI" id="CHEBI:18420"/>
        <label>1</label>
    </ligand>
</feature>
<feature type="binding site" evidence="1">
    <location>
        <position position="227"/>
    </location>
    <ligand>
        <name>Mg(2+)</name>
        <dbReference type="ChEBI" id="CHEBI:18420"/>
        <label>2</label>
    </ligand>
</feature>
<feature type="binding site" evidence="1">
    <location>
        <position position="231"/>
    </location>
    <ligand>
        <name>Mg(2+)</name>
        <dbReference type="ChEBI" id="CHEBI:18420"/>
        <label>2</label>
    </ligand>
</feature>
<feature type="binding site" evidence="1">
    <location>
        <position position="252"/>
    </location>
    <ligand>
        <name>substrate</name>
    </ligand>
</feature>
<reference key="1">
    <citation type="submission" date="2007-05" db="EMBL/GenBank/DDBJ databases">
        <title>Complete sequence of chromosome of Acidiphilium cryptum JF-5.</title>
        <authorList>
            <consortium name="US DOE Joint Genome Institute"/>
            <person name="Copeland A."/>
            <person name="Lucas S."/>
            <person name="Lapidus A."/>
            <person name="Barry K."/>
            <person name="Detter J.C."/>
            <person name="Glavina del Rio T."/>
            <person name="Hammon N."/>
            <person name="Israni S."/>
            <person name="Dalin E."/>
            <person name="Tice H."/>
            <person name="Pitluck S."/>
            <person name="Sims D."/>
            <person name="Brettin T."/>
            <person name="Bruce D."/>
            <person name="Han C."/>
            <person name="Schmutz J."/>
            <person name="Larimer F."/>
            <person name="Land M."/>
            <person name="Hauser L."/>
            <person name="Kyrpides N."/>
            <person name="Kim E."/>
            <person name="Magnuson T."/>
            <person name="Richardson P."/>
        </authorList>
    </citation>
    <scope>NUCLEOTIDE SEQUENCE [LARGE SCALE GENOMIC DNA]</scope>
    <source>
        <strain>JF-5</strain>
    </source>
</reference>
<proteinExistence type="inferred from homology"/>
<organism>
    <name type="scientific">Acidiphilium cryptum (strain JF-5)</name>
    <dbReference type="NCBI Taxonomy" id="349163"/>
    <lineage>
        <taxon>Bacteria</taxon>
        <taxon>Pseudomonadati</taxon>
        <taxon>Pseudomonadota</taxon>
        <taxon>Alphaproteobacteria</taxon>
        <taxon>Acetobacterales</taxon>
        <taxon>Acidocellaceae</taxon>
        <taxon>Acidiphilium</taxon>
    </lineage>
</organism>
<gene>
    <name evidence="1" type="primary">ilvC</name>
    <name type="ordered locus">Acry_2559</name>
</gene>
<evidence type="ECO:0000255" key="1">
    <source>
        <dbReference type="HAMAP-Rule" id="MF_00435"/>
    </source>
</evidence>
<evidence type="ECO:0000255" key="2">
    <source>
        <dbReference type="PROSITE-ProRule" id="PRU01197"/>
    </source>
</evidence>
<evidence type="ECO:0000255" key="3">
    <source>
        <dbReference type="PROSITE-ProRule" id="PRU01198"/>
    </source>
</evidence>
<accession>A5G1L8</accession>
<dbReference type="EC" id="1.1.1.86" evidence="1"/>
<dbReference type="EMBL" id="CP000697">
    <property type="protein sequence ID" value="ABQ31750.1"/>
    <property type="molecule type" value="Genomic_DNA"/>
</dbReference>
<dbReference type="RefSeq" id="WP_007422622.1">
    <property type="nucleotide sequence ID" value="NC_009484.1"/>
</dbReference>
<dbReference type="SMR" id="A5G1L8"/>
<dbReference type="STRING" id="349163.Acry_2559"/>
<dbReference type="KEGG" id="acr:Acry_2559"/>
<dbReference type="eggNOG" id="COG0059">
    <property type="taxonomic scope" value="Bacteria"/>
</dbReference>
<dbReference type="HOGENOM" id="CLU_033821_0_1_5"/>
<dbReference type="UniPathway" id="UPA00047">
    <property type="reaction ID" value="UER00056"/>
</dbReference>
<dbReference type="UniPathway" id="UPA00049">
    <property type="reaction ID" value="UER00060"/>
</dbReference>
<dbReference type="Proteomes" id="UP000000245">
    <property type="component" value="Chromosome"/>
</dbReference>
<dbReference type="GO" id="GO:0005829">
    <property type="term" value="C:cytosol"/>
    <property type="evidence" value="ECO:0007669"/>
    <property type="project" value="TreeGrafter"/>
</dbReference>
<dbReference type="GO" id="GO:0004455">
    <property type="term" value="F:ketol-acid reductoisomerase activity"/>
    <property type="evidence" value="ECO:0007669"/>
    <property type="project" value="UniProtKB-UniRule"/>
</dbReference>
<dbReference type="GO" id="GO:0000287">
    <property type="term" value="F:magnesium ion binding"/>
    <property type="evidence" value="ECO:0007669"/>
    <property type="project" value="UniProtKB-UniRule"/>
</dbReference>
<dbReference type="GO" id="GO:0050661">
    <property type="term" value="F:NADP binding"/>
    <property type="evidence" value="ECO:0007669"/>
    <property type="project" value="InterPro"/>
</dbReference>
<dbReference type="GO" id="GO:0009097">
    <property type="term" value="P:isoleucine biosynthetic process"/>
    <property type="evidence" value="ECO:0007669"/>
    <property type="project" value="UniProtKB-UniRule"/>
</dbReference>
<dbReference type="GO" id="GO:0009099">
    <property type="term" value="P:L-valine biosynthetic process"/>
    <property type="evidence" value="ECO:0007669"/>
    <property type="project" value="UniProtKB-UniRule"/>
</dbReference>
<dbReference type="FunFam" id="3.40.50.720:FF:000023">
    <property type="entry name" value="Ketol-acid reductoisomerase (NADP(+))"/>
    <property type="match status" value="1"/>
</dbReference>
<dbReference type="Gene3D" id="6.10.240.10">
    <property type="match status" value="1"/>
</dbReference>
<dbReference type="Gene3D" id="3.40.50.720">
    <property type="entry name" value="NAD(P)-binding Rossmann-like Domain"/>
    <property type="match status" value="1"/>
</dbReference>
<dbReference type="HAMAP" id="MF_00435">
    <property type="entry name" value="IlvC"/>
    <property type="match status" value="1"/>
</dbReference>
<dbReference type="InterPro" id="IPR008927">
    <property type="entry name" value="6-PGluconate_DH-like_C_sf"/>
</dbReference>
<dbReference type="InterPro" id="IPR013023">
    <property type="entry name" value="KARI"/>
</dbReference>
<dbReference type="InterPro" id="IPR000506">
    <property type="entry name" value="KARI_C"/>
</dbReference>
<dbReference type="InterPro" id="IPR013116">
    <property type="entry name" value="KARI_N"/>
</dbReference>
<dbReference type="InterPro" id="IPR014359">
    <property type="entry name" value="KARI_prok"/>
</dbReference>
<dbReference type="InterPro" id="IPR036291">
    <property type="entry name" value="NAD(P)-bd_dom_sf"/>
</dbReference>
<dbReference type="NCBIfam" id="TIGR00465">
    <property type="entry name" value="ilvC"/>
    <property type="match status" value="1"/>
</dbReference>
<dbReference type="NCBIfam" id="NF004017">
    <property type="entry name" value="PRK05479.1"/>
    <property type="match status" value="1"/>
</dbReference>
<dbReference type="NCBIfam" id="NF009940">
    <property type="entry name" value="PRK13403.1"/>
    <property type="match status" value="1"/>
</dbReference>
<dbReference type="PANTHER" id="PTHR21371">
    <property type="entry name" value="KETOL-ACID REDUCTOISOMERASE, MITOCHONDRIAL"/>
    <property type="match status" value="1"/>
</dbReference>
<dbReference type="PANTHER" id="PTHR21371:SF1">
    <property type="entry name" value="KETOL-ACID REDUCTOISOMERASE, MITOCHONDRIAL"/>
    <property type="match status" value="1"/>
</dbReference>
<dbReference type="Pfam" id="PF01450">
    <property type="entry name" value="KARI_C"/>
    <property type="match status" value="1"/>
</dbReference>
<dbReference type="Pfam" id="PF07991">
    <property type="entry name" value="KARI_N"/>
    <property type="match status" value="1"/>
</dbReference>
<dbReference type="PIRSF" id="PIRSF000116">
    <property type="entry name" value="IlvC_gammaproteo"/>
    <property type="match status" value="1"/>
</dbReference>
<dbReference type="SUPFAM" id="SSF48179">
    <property type="entry name" value="6-phosphogluconate dehydrogenase C-terminal domain-like"/>
    <property type="match status" value="1"/>
</dbReference>
<dbReference type="SUPFAM" id="SSF51735">
    <property type="entry name" value="NAD(P)-binding Rossmann-fold domains"/>
    <property type="match status" value="1"/>
</dbReference>
<dbReference type="PROSITE" id="PS51851">
    <property type="entry name" value="KARI_C"/>
    <property type="match status" value="1"/>
</dbReference>
<dbReference type="PROSITE" id="PS51850">
    <property type="entry name" value="KARI_N"/>
    <property type="match status" value="1"/>
</dbReference>